<reference key="1">
    <citation type="journal article" date="2002" name="J. Biochem.">
        <title>Isolation and characterization of the dcw cluster from the piezophilic deep-sea bacterium Shewanella violacea.</title>
        <authorList>
            <person name="Ishii A."/>
            <person name="Nakasone K."/>
            <person name="Sato T."/>
            <person name="Wachi M."/>
            <person name="Sugai M."/>
            <person name="Nagai K."/>
            <person name="Kato C."/>
        </authorList>
    </citation>
    <scope>NUCLEOTIDE SEQUENCE [GENOMIC DNA]</scope>
</reference>
<reference key="2">
    <citation type="journal article" date="2010" name="Mol. Biosyst.">
        <title>Complete genome sequence and comparative analysis of Shewanella violacea, a psychrophilic and piezophilic bacterium from deep sea floor sediments.</title>
        <authorList>
            <person name="Aono E."/>
            <person name="Baba T."/>
            <person name="Ara T."/>
            <person name="Nishi T."/>
            <person name="Nakamichi T."/>
            <person name="Inamoto E."/>
            <person name="Toyonaga H."/>
            <person name="Hasegawa M."/>
            <person name="Takai Y."/>
            <person name="Okumura Y."/>
            <person name="Baba M."/>
            <person name="Tomita M."/>
            <person name="Kato C."/>
            <person name="Oshima T."/>
            <person name="Nakasone K."/>
            <person name="Mori H."/>
        </authorList>
    </citation>
    <scope>NUCLEOTIDE SEQUENCE [LARGE SCALE GENOMIC DNA]</scope>
    <source>
        <strain>JCM 10179 / CIP 106290 / LMG 19151 / DSS12</strain>
    </source>
</reference>
<organism>
    <name type="scientific">Shewanella violacea (strain JCM 10179 / CIP 106290 / LMG 19151 / DSS12)</name>
    <dbReference type="NCBI Taxonomy" id="637905"/>
    <lineage>
        <taxon>Bacteria</taxon>
        <taxon>Pseudomonadati</taxon>
        <taxon>Pseudomonadota</taxon>
        <taxon>Gammaproteobacteria</taxon>
        <taxon>Alteromonadales</taxon>
        <taxon>Shewanellaceae</taxon>
        <taxon>Shewanella</taxon>
    </lineage>
</organism>
<keyword id="KW-0131">Cell cycle</keyword>
<keyword id="KW-0132">Cell division</keyword>
<keyword id="KW-0997">Cell inner membrane</keyword>
<keyword id="KW-1003">Cell membrane</keyword>
<keyword id="KW-0133">Cell shape</keyword>
<keyword id="KW-0961">Cell wall biogenesis/degradation</keyword>
<keyword id="KW-0460">Magnesium</keyword>
<keyword id="KW-0472">Membrane</keyword>
<keyword id="KW-0479">Metal-binding</keyword>
<keyword id="KW-0573">Peptidoglycan synthesis</keyword>
<keyword id="KW-1185">Reference proteome</keyword>
<keyword id="KW-0808">Transferase</keyword>
<keyword id="KW-0812">Transmembrane</keyword>
<keyword id="KW-1133">Transmembrane helix</keyword>
<evidence type="ECO:0000255" key="1">
    <source>
        <dbReference type="HAMAP-Rule" id="MF_00038"/>
    </source>
</evidence>
<name>MRAY_SHEVD</name>
<protein>
    <recommendedName>
        <fullName evidence="1">Phospho-N-acetylmuramoyl-pentapeptide-transferase</fullName>
        <ecNumber evidence="1">2.7.8.13</ecNumber>
    </recommendedName>
    <alternativeName>
        <fullName evidence="1">UDP-MurNAc-pentapeptide phosphotransferase</fullName>
    </alternativeName>
</protein>
<dbReference type="EC" id="2.7.8.13" evidence="1"/>
<dbReference type="EMBL" id="AB052554">
    <property type="protein sequence ID" value="BAB19199.1"/>
    <property type="molecule type" value="Genomic_DNA"/>
</dbReference>
<dbReference type="EMBL" id="AP011177">
    <property type="protein sequence ID" value="BAJ04007.1"/>
    <property type="molecule type" value="Genomic_DNA"/>
</dbReference>
<dbReference type="RefSeq" id="WP_013053298.1">
    <property type="nucleotide sequence ID" value="NC_014012.1"/>
</dbReference>
<dbReference type="SMR" id="Q9F1N3"/>
<dbReference type="STRING" id="637905.SVI_4036"/>
<dbReference type="KEGG" id="svo:SVI_4036"/>
<dbReference type="eggNOG" id="COG0472">
    <property type="taxonomic scope" value="Bacteria"/>
</dbReference>
<dbReference type="HOGENOM" id="CLU_023982_0_0_6"/>
<dbReference type="OrthoDB" id="9805475at2"/>
<dbReference type="UniPathway" id="UPA00219"/>
<dbReference type="Proteomes" id="UP000002350">
    <property type="component" value="Chromosome"/>
</dbReference>
<dbReference type="GO" id="GO:0005886">
    <property type="term" value="C:plasma membrane"/>
    <property type="evidence" value="ECO:0007669"/>
    <property type="project" value="UniProtKB-SubCell"/>
</dbReference>
<dbReference type="GO" id="GO:0046872">
    <property type="term" value="F:metal ion binding"/>
    <property type="evidence" value="ECO:0007669"/>
    <property type="project" value="UniProtKB-KW"/>
</dbReference>
<dbReference type="GO" id="GO:0008963">
    <property type="term" value="F:phospho-N-acetylmuramoyl-pentapeptide-transferase activity"/>
    <property type="evidence" value="ECO:0007669"/>
    <property type="project" value="UniProtKB-UniRule"/>
</dbReference>
<dbReference type="GO" id="GO:0051992">
    <property type="term" value="F:UDP-N-acetylmuramoyl-L-alanyl-D-glutamyl-meso-2,6-diaminopimelyl-D-alanyl-D-alanine:undecaprenyl-phosphate transferase activity"/>
    <property type="evidence" value="ECO:0007669"/>
    <property type="project" value="RHEA"/>
</dbReference>
<dbReference type="GO" id="GO:0051301">
    <property type="term" value="P:cell division"/>
    <property type="evidence" value="ECO:0007669"/>
    <property type="project" value="UniProtKB-KW"/>
</dbReference>
<dbReference type="GO" id="GO:0071555">
    <property type="term" value="P:cell wall organization"/>
    <property type="evidence" value="ECO:0007669"/>
    <property type="project" value="UniProtKB-KW"/>
</dbReference>
<dbReference type="GO" id="GO:0009252">
    <property type="term" value="P:peptidoglycan biosynthetic process"/>
    <property type="evidence" value="ECO:0007669"/>
    <property type="project" value="UniProtKB-UniRule"/>
</dbReference>
<dbReference type="GO" id="GO:0008360">
    <property type="term" value="P:regulation of cell shape"/>
    <property type="evidence" value="ECO:0007669"/>
    <property type="project" value="UniProtKB-KW"/>
</dbReference>
<dbReference type="CDD" id="cd06852">
    <property type="entry name" value="GT_MraY"/>
    <property type="match status" value="1"/>
</dbReference>
<dbReference type="HAMAP" id="MF_00038">
    <property type="entry name" value="MraY"/>
    <property type="match status" value="1"/>
</dbReference>
<dbReference type="InterPro" id="IPR000715">
    <property type="entry name" value="Glycosyl_transferase_4"/>
</dbReference>
<dbReference type="InterPro" id="IPR003524">
    <property type="entry name" value="PNAcMuramoyl-5peptid_Trfase"/>
</dbReference>
<dbReference type="InterPro" id="IPR018480">
    <property type="entry name" value="PNAcMuramoyl-5peptid_Trfase_CS"/>
</dbReference>
<dbReference type="NCBIfam" id="TIGR00445">
    <property type="entry name" value="mraY"/>
    <property type="match status" value="1"/>
</dbReference>
<dbReference type="PANTHER" id="PTHR22926">
    <property type="entry name" value="PHOSPHO-N-ACETYLMURAMOYL-PENTAPEPTIDE-TRANSFERASE"/>
    <property type="match status" value="1"/>
</dbReference>
<dbReference type="PANTHER" id="PTHR22926:SF5">
    <property type="entry name" value="PHOSPHO-N-ACETYLMURAMOYL-PENTAPEPTIDE-TRANSFERASE HOMOLOG"/>
    <property type="match status" value="1"/>
</dbReference>
<dbReference type="Pfam" id="PF00953">
    <property type="entry name" value="Glycos_transf_4"/>
    <property type="match status" value="1"/>
</dbReference>
<dbReference type="Pfam" id="PF10555">
    <property type="entry name" value="MraY_sig1"/>
    <property type="match status" value="1"/>
</dbReference>
<dbReference type="PROSITE" id="PS01347">
    <property type="entry name" value="MRAY_1"/>
    <property type="match status" value="1"/>
</dbReference>
<dbReference type="PROSITE" id="PS01348">
    <property type="entry name" value="MRAY_2"/>
    <property type="match status" value="1"/>
</dbReference>
<proteinExistence type="inferred from homology"/>
<gene>
    <name evidence="1" type="primary">mraY</name>
    <name type="ordered locus">SVI_4036</name>
</gene>
<comment type="function">
    <text evidence="1">Catalyzes the initial step of the lipid cycle reactions in the biosynthesis of the cell wall peptidoglycan: transfers peptidoglycan precursor phospho-MurNAc-pentapeptide from UDP-MurNAc-pentapeptide onto the lipid carrier undecaprenyl phosphate, yielding undecaprenyl-pyrophosphoryl-MurNAc-pentapeptide, known as lipid I.</text>
</comment>
<comment type="catalytic activity">
    <reaction evidence="1">
        <text>UDP-N-acetyl-alpha-D-muramoyl-L-alanyl-gamma-D-glutamyl-meso-2,6-diaminopimeloyl-D-alanyl-D-alanine + di-trans,octa-cis-undecaprenyl phosphate = di-trans,octa-cis-undecaprenyl diphospho-N-acetyl-alpha-D-muramoyl-L-alanyl-D-glutamyl-meso-2,6-diaminopimeloyl-D-alanyl-D-alanine + UMP</text>
        <dbReference type="Rhea" id="RHEA:28386"/>
        <dbReference type="ChEBI" id="CHEBI:57865"/>
        <dbReference type="ChEBI" id="CHEBI:60392"/>
        <dbReference type="ChEBI" id="CHEBI:61386"/>
        <dbReference type="ChEBI" id="CHEBI:61387"/>
        <dbReference type="EC" id="2.7.8.13"/>
    </reaction>
</comment>
<comment type="cofactor">
    <cofactor evidence="1">
        <name>Mg(2+)</name>
        <dbReference type="ChEBI" id="CHEBI:18420"/>
    </cofactor>
</comment>
<comment type="pathway">
    <text evidence="1">Cell wall biogenesis; peptidoglycan biosynthesis.</text>
</comment>
<comment type="subcellular location">
    <subcellularLocation>
        <location evidence="1">Cell inner membrane</location>
        <topology evidence="1">Multi-pass membrane protein</topology>
    </subcellularLocation>
</comment>
<comment type="similarity">
    <text evidence="1">Belongs to the glycosyltransferase 4 family. MraY subfamily.</text>
</comment>
<sequence length="360" mass="39777">MLVYLAEYLTQFYSGFNVFSYVTFRAILGLMTALVFCLWWGPKMIRRLQTLQIGQVVRSDGPESHFSKSGTPTMGGILILAGIFISVLLWGDLGSRYVWVVLFVLASFGLIGFIDDYRKVVRKDTKGLIARWKYILQSLAAIIIAFYLYASADTVGETQLVVPFFKDIMPQMGAFFIVLAYFTIVGSSNAVNLTDGLDGLAIMPTVMVAAAFALIAYLSGHVQFANYLHIPYLPGAGELVIVCTAIVGAGLGFLWFNTYPAQVFMGDVGSLALGAALGAIAVLVRQEILLVIMGGVFVMETVSVILQVGSYKLRGQRIFRMAPIHHHYELKGWPEPRVIVRFWIISLFLVMLGLATLKLR</sequence>
<accession>Q9F1N3</accession>
<accession>D4ZDU6</accession>
<feature type="chain" id="PRO_0000108887" description="Phospho-N-acetylmuramoyl-pentapeptide-transferase">
    <location>
        <begin position="1"/>
        <end position="360"/>
    </location>
</feature>
<feature type="transmembrane region" description="Helical" evidence="1">
    <location>
        <begin position="21"/>
        <end position="41"/>
    </location>
</feature>
<feature type="transmembrane region" description="Helical" evidence="1">
    <location>
        <begin position="74"/>
        <end position="94"/>
    </location>
</feature>
<feature type="transmembrane region" description="Helical" evidence="1">
    <location>
        <begin position="97"/>
        <end position="117"/>
    </location>
</feature>
<feature type="transmembrane region" description="Helical" evidence="1">
    <location>
        <begin position="135"/>
        <end position="155"/>
    </location>
</feature>
<feature type="transmembrane region" description="Helical" evidence="1">
    <location>
        <begin position="168"/>
        <end position="188"/>
    </location>
</feature>
<feature type="transmembrane region" description="Helical" evidence="1">
    <location>
        <begin position="199"/>
        <end position="219"/>
    </location>
</feature>
<feature type="transmembrane region" description="Helical" evidence="1">
    <location>
        <begin position="236"/>
        <end position="256"/>
    </location>
</feature>
<feature type="transmembrane region" description="Helical" evidence="1">
    <location>
        <begin position="263"/>
        <end position="283"/>
    </location>
</feature>
<feature type="transmembrane region" description="Helical" evidence="1">
    <location>
        <begin position="288"/>
        <end position="308"/>
    </location>
</feature>
<feature type="transmembrane region" description="Helical" evidence="1">
    <location>
        <begin position="338"/>
        <end position="358"/>
    </location>
</feature>